<organism>
    <name type="scientific">Pseudomonas paraeruginosa (strain DSM 24068 / PA7)</name>
    <name type="common">Pseudomonas aeruginosa (strain PA7)</name>
    <dbReference type="NCBI Taxonomy" id="381754"/>
    <lineage>
        <taxon>Bacteria</taxon>
        <taxon>Pseudomonadati</taxon>
        <taxon>Pseudomonadota</taxon>
        <taxon>Gammaproteobacteria</taxon>
        <taxon>Pseudomonadales</taxon>
        <taxon>Pseudomonadaceae</taxon>
        <taxon>Pseudomonas</taxon>
        <taxon>Pseudomonas paraeruginosa</taxon>
    </lineage>
</organism>
<proteinExistence type="inferred from homology"/>
<evidence type="ECO:0000255" key="1">
    <source>
        <dbReference type="HAMAP-Rule" id="MF_01620"/>
    </source>
</evidence>
<protein>
    <recommendedName>
        <fullName evidence="1">3-ketoacyl-CoA thiolase</fullName>
        <ecNumber evidence="1">2.3.1.16</ecNumber>
    </recommendedName>
    <alternativeName>
        <fullName evidence="1">Acetyl-CoA acyltransferase</fullName>
    </alternativeName>
    <alternativeName>
        <fullName evidence="1">Beta-ketothiolase</fullName>
    </alternativeName>
    <alternativeName>
        <fullName evidence="1">Fatty acid oxidation complex subunit beta</fullName>
    </alternativeName>
</protein>
<accession>A6V383</accession>
<comment type="function">
    <text evidence="1">Catalyzes the final step of fatty acid oxidation in which acetyl-CoA is released and the CoA ester of a fatty acid two carbons shorter is formed.</text>
</comment>
<comment type="catalytic activity">
    <reaction evidence="1">
        <text>an acyl-CoA + acetyl-CoA = a 3-oxoacyl-CoA + CoA</text>
        <dbReference type="Rhea" id="RHEA:21564"/>
        <dbReference type="ChEBI" id="CHEBI:57287"/>
        <dbReference type="ChEBI" id="CHEBI:57288"/>
        <dbReference type="ChEBI" id="CHEBI:58342"/>
        <dbReference type="ChEBI" id="CHEBI:90726"/>
        <dbReference type="EC" id="2.3.1.16"/>
    </reaction>
</comment>
<comment type="pathway">
    <text evidence="1">Lipid metabolism; fatty acid beta-oxidation.</text>
</comment>
<comment type="subunit">
    <text evidence="1">Heterotetramer of two alpha chains (FadB) and two beta chains (FadA).</text>
</comment>
<comment type="subcellular location">
    <subcellularLocation>
        <location evidence="1">Cytoplasm</location>
    </subcellularLocation>
</comment>
<comment type="similarity">
    <text evidence="1">Belongs to the thiolase-like superfamily. Thiolase family.</text>
</comment>
<keyword id="KW-0012">Acyltransferase</keyword>
<keyword id="KW-0963">Cytoplasm</keyword>
<keyword id="KW-0276">Fatty acid metabolism</keyword>
<keyword id="KW-0442">Lipid degradation</keyword>
<keyword id="KW-0443">Lipid metabolism</keyword>
<keyword id="KW-0808">Transferase</keyword>
<name>FADA_PSEP7</name>
<gene>
    <name evidence="1" type="primary">fadA</name>
    <name type="ordered locus">PSPA7_2146</name>
</gene>
<feature type="chain" id="PRO_0000323548" description="3-ketoacyl-CoA thiolase">
    <location>
        <begin position="1"/>
        <end position="391"/>
    </location>
</feature>
<feature type="active site" description="Acyl-thioester intermediate" evidence="1">
    <location>
        <position position="95"/>
    </location>
</feature>
<feature type="active site" description="Proton acceptor" evidence="1">
    <location>
        <position position="347"/>
    </location>
</feature>
<feature type="active site" description="Proton acceptor" evidence="1">
    <location>
        <position position="377"/>
    </location>
</feature>
<sequence>MSLNPRDVVIVDFGRTPMGRSKGGMHRNTRAETMSAHLISKLLERNPKVDPAEVEDVIWGCVNQTLEQGWNIARMASLMTQIPHTSAAQTVSRLCGSSMSALHTAAQAIQTGNGDVFVIGGVEHMGHVGMMHGVDPNPHLSLYAAKASGMMGLTAEMLGKMHGISREAQDKFGARSHQLAWKATQEGKFKDEIIPMEGYDENGFLKVFDFDETIRPETTVETLAQLKPAFNPKGGTVTAGTSSQITDGASCMIVMSAQRAQDLGIQPMAVIRSMAVAGVDPAIMGYGPVPSTNKALKRAGLTIADIDFVELNEAFAAQALPVLKDLKLLDKMDEKVNLHGGAIALGHPFGCSGARISGTLLNVMKQNGGTLGVSTMCVGLGQGITTVFERV</sequence>
<dbReference type="EC" id="2.3.1.16" evidence="1"/>
<dbReference type="EMBL" id="CP000744">
    <property type="protein sequence ID" value="ABR80694.1"/>
    <property type="molecule type" value="Genomic_DNA"/>
</dbReference>
<dbReference type="RefSeq" id="WP_003138585.1">
    <property type="nucleotide sequence ID" value="NC_009656.1"/>
</dbReference>
<dbReference type="SMR" id="A6V383"/>
<dbReference type="GeneID" id="77220495"/>
<dbReference type="KEGG" id="pap:PSPA7_2146"/>
<dbReference type="HOGENOM" id="CLU_031026_2_3_6"/>
<dbReference type="UniPathway" id="UPA00659"/>
<dbReference type="Proteomes" id="UP000001582">
    <property type="component" value="Chromosome"/>
</dbReference>
<dbReference type="GO" id="GO:0005737">
    <property type="term" value="C:cytoplasm"/>
    <property type="evidence" value="ECO:0007669"/>
    <property type="project" value="UniProtKB-SubCell"/>
</dbReference>
<dbReference type="GO" id="GO:0003988">
    <property type="term" value="F:acetyl-CoA C-acyltransferase activity"/>
    <property type="evidence" value="ECO:0007669"/>
    <property type="project" value="UniProtKB-UniRule"/>
</dbReference>
<dbReference type="GO" id="GO:0006635">
    <property type="term" value="P:fatty acid beta-oxidation"/>
    <property type="evidence" value="ECO:0007669"/>
    <property type="project" value="UniProtKB-UniRule"/>
</dbReference>
<dbReference type="GO" id="GO:0010124">
    <property type="term" value="P:phenylacetate catabolic process"/>
    <property type="evidence" value="ECO:0007669"/>
    <property type="project" value="TreeGrafter"/>
</dbReference>
<dbReference type="CDD" id="cd00751">
    <property type="entry name" value="thiolase"/>
    <property type="match status" value="1"/>
</dbReference>
<dbReference type="FunFam" id="3.40.47.10:FF:000010">
    <property type="entry name" value="Acetyl-CoA acetyltransferase (Thiolase)"/>
    <property type="match status" value="1"/>
</dbReference>
<dbReference type="Gene3D" id="3.40.47.10">
    <property type="match status" value="2"/>
</dbReference>
<dbReference type="HAMAP" id="MF_01620">
    <property type="entry name" value="FadA"/>
    <property type="match status" value="1"/>
</dbReference>
<dbReference type="InterPro" id="IPR012805">
    <property type="entry name" value="FadA"/>
</dbReference>
<dbReference type="InterPro" id="IPR002155">
    <property type="entry name" value="Thiolase"/>
</dbReference>
<dbReference type="InterPro" id="IPR016039">
    <property type="entry name" value="Thiolase-like"/>
</dbReference>
<dbReference type="InterPro" id="IPR050215">
    <property type="entry name" value="Thiolase-like_sf_Thiolase"/>
</dbReference>
<dbReference type="InterPro" id="IPR020615">
    <property type="entry name" value="Thiolase_acyl_enz_int_AS"/>
</dbReference>
<dbReference type="InterPro" id="IPR020617">
    <property type="entry name" value="Thiolase_C"/>
</dbReference>
<dbReference type="InterPro" id="IPR020613">
    <property type="entry name" value="Thiolase_CS"/>
</dbReference>
<dbReference type="InterPro" id="IPR020616">
    <property type="entry name" value="Thiolase_N"/>
</dbReference>
<dbReference type="NCBIfam" id="TIGR01930">
    <property type="entry name" value="AcCoA-C-Actrans"/>
    <property type="match status" value="1"/>
</dbReference>
<dbReference type="NCBIfam" id="TIGR02445">
    <property type="entry name" value="fadA"/>
    <property type="match status" value="1"/>
</dbReference>
<dbReference type="NCBIfam" id="NF006510">
    <property type="entry name" value="PRK08947.1"/>
    <property type="match status" value="1"/>
</dbReference>
<dbReference type="PANTHER" id="PTHR43853:SF11">
    <property type="entry name" value="3-KETOACYL-COA THIOLASE FADA"/>
    <property type="match status" value="1"/>
</dbReference>
<dbReference type="PANTHER" id="PTHR43853">
    <property type="entry name" value="3-KETOACYL-COA THIOLASE, PEROXISOMAL"/>
    <property type="match status" value="1"/>
</dbReference>
<dbReference type="Pfam" id="PF02803">
    <property type="entry name" value="Thiolase_C"/>
    <property type="match status" value="1"/>
</dbReference>
<dbReference type="Pfam" id="PF00108">
    <property type="entry name" value="Thiolase_N"/>
    <property type="match status" value="1"/>
</dbReference>
<dbReference type="PIRSF" id="PIRSF000429">
    <property type="entry name" value="Ac-CoA_Ac_transf"/>
    <property type="match status" value="1"/>
</dbReference>
<dbReference type="SUPFAM" id="SSF53901">
    <property type="entry name" value="Thiolase-like"/>
    <property type="match status" value="2"/>
</dbReference>
<dbReference type="PROSITE" id="PS00098">
    <property type="entry name" value="THIOLASE_1"/>
    <property type="match status" value="1"/>
</dbReference>
<dbReference type="PROSITE" id="PS00737">
    <property type="entry name" value="THIOLASE_2"/>
    <property type="match status" value="1"/>
</dbReference>
<reference key="1">
    <citation type="submission" date="2007-06" db="EMBL/GenBank/DDBJ databases">
        <authorList>
            <person name="Dodson R.J."/>
            <person name="Harkins D."/>
            <person name="Paulsen I.T."/>
        </authorList>
    </citation>
    <scope>NUCLEOTIDE SEQUENCE [LARGE SCALE GENOMIC DNA]</scope>
    <source>
        <strain>DSM 24068 / PA7</strain>
    </source>
</reference>